<accession>P13869</accession>
<organism>
    <name type="scientific">Petunia hybrida</name>
    <name type="common">Petunia</name>
    <dbReference type="NCBI Taxonomy" id="4102"/>
    <lineage>
        <taxon>Eukaryota</taxon>
        <taxon>Viridiplantae</taxon>
        <taxon>Streptophyta</taxon>
        <taxon>Embryophyta</taxon>
        <taxon>Tracheophyta</taxon>
        <taxon>Spermatophyta</taxon>
        <taxon>Magnoliopsida</taxon>
        <taxon>eudicotyledons</taxon>
        <taxon>Gunneridae</taxon>
        <taxon>Pentapetalae</taxon>
        <taxon>asterids</taxon>
        <taxon>lamiids</taxon>
        <taxon>Solanales</taxon>
        <taxon>Solanaceae</taxon>
        <taxon>Petunioideae</taxon>
        <taxon>Petunia</taxon>
    </lineage>
</organism>
<proteinExistence type="evidence at transcript level"/>
<protein>
    <recommendedName>
        <fullName>Chlorophyll a-b binding protein, chloroplastic</fullName>
    </recommendedName>
    <alternativeName>
        <fullName>LHCI type II CAB</fullName>
    </alternativeName>
</protein>
<name>CB12_PETHY</name>
<reference key="1">
    <citation type="journal article" date="1987" name="Plant Mol. Biol.">
        <title>Characterization of a full-length petunia cDNA encoding a polypeptide of the light-harvesting complex associated with photosystem I.</title>
        <authorList>
            <person name="Stayton M.M."/>
            <person name="Brosio P."/>
            <person name="Dunsmuir P."/>
        </authorList>
        <dbReference type="AGRICOLA" id="IND92001185"/>
    </citation>
    <scope>NUCLEOTIDE SEQUENCE [MRNA]</scope>
</reference>
<evidence type="ECO:0000250" key="1"/>
<evidence type="ECO:0000255" key="2"/>
<evidence type="ECO:0000305" key="3"/>
<feature type="transit peptide" description="Chloroplast" evidence="3">
    <location>
        <begin position="1"/>
        <end position="41"/>
    </location>
</feature>
<feature type="chain" id="PRO_0000003713" description="Chlorophyll a-b binding protein, chloroplastic">
    <location>
        <begin position="42"/>
        <end position="270"/>
    </location>
</feature>
<feature type="transmembrane region" description="Helical" evidence="2">
    <location>
        <begin position="113"/>
        <end position="133"/>
    </location>
</feature>
<feature type="transmembrane region" description="Helical" evidence="2">
    <location>
        <begin position="146"/>
        <end position="166"/>
    </location>
</feature>
<feature type="transmembrane region" description="Helical" evidence="2">
    <location>
        <begin position="228"/>
        <end position="248"/>
    </location>
</feature>
<feature type="binding site" description="axial binding residue" evidence="1">
    <location>
        <position position="68"/>
    </location>
    <ligand>
        <name>chlorophyll b</name>
        <dbReference type="ChEBI" id="CHEBI:61721"/>
        <label>1</label>
    </ligand>
    <ligandPart>
        <name>Mg</name>
        <dbReference type="ChEBI" id="CHEBI:25107"/>
    </ligandPart>
</feature>
<feature type="binding site" evidence="1">
    <location>
        <position position="88"/>
    </location>
    <ligand>
        <name>chlorophyll a</name>
        <dbReference type="ChEBI" id="CHEBI:58416"/>
        <label>1</label>
    </ligand>
</feature>
<feature type="binding site" description="axial binding residue" evidence="1">
    <location>
        <position position="107"/>
    </location>
    <ligand>
        <name>chlorophyll a</name>
        <dbReference type="ChEBI" id="CHEBI:58416"/>
        <label>1</label>
    </ligand>
    <ligandPart>
        <name>Mg</name>
        <dbReference type="ChEBI" id="CHEBI:25107"/>
    </ligandPart>
</feature>
<feature type="binding site" description="axial binding residue" evidence="1">
    <location>
        <position position="110"/>
    </location>
    <ligand>
        <name>chlorophyll a</name>
        <dbReference type="ChEBI" id="CHEBI:58416"/>
        <label>2</label>
    </ligand>
    <ligandPart>
        <name>Mg</name>
        <dbReference type="ChEBI" id="CHEBI:25107"/>
    </ligandPart>
</feature>
<feature type="binding site" evidence="1">
    <location>
        <position position="112"/>
    </location>
    <ligand>
        <name>chlorophyll b</name>
        <dbReference type="ChEBI" id="CHEBI:61721"/>
        <label>2</label>
    </ligand>
</feature>
<feature type="binding site" evidence="1">
    <location>
        <position position="144"/>
    </location>
    <ligand>
        <name>chlorophyll a</name>
        <dbReference type="ChEBI" id="CHEBI:58416"/>
        <label>3</label>
    </ligand>
</feature>
<feature type="binding site" description="axial binding residue" evidence="1">
    <location>
        <position position="155"/>
    </location>
    <ligand>
        <name>chlorophyll b</name>
        <dbReference type="ChEBI" id="CHEBI:61721"/>
        <label>2</label>
    </ligand>
    <ligandPart>
        <name>Mg</name>
        <dbReference type="ChEBI" id="CHEBI:25107"/>
    </ligandPart>
</feature>
<feature type="binding site" description="axial binding residue" evidence="1">
    <location>
        <position position="165"/>
    </location>
    <ligand>
        <name>chlorophyll b</name>
        <dbReference type="ChEBI" id="CHEBI:61721"/>
        <label>3</label>
    </ligand>
    <ligandPart>
        <name>Mg</name>
        <dbReference type="ChEBI" id="CHEBI:25107"/>
    </ligandPart>
</feature>
<feature type="binding site" evidence="1">
    <location>
        <position position="168"/>
    </location>
    <ligand>
        <name>chlorophyll b</name>
        <dbReference type="ChEBI" id="CHEBI:61721"/>
        <label>4</label>
    </ligand>
</feature>
<feature type="binding site" evidence="1">
    <location>
        <position position="221"/>
    </location>
    <ligand>
        <name>chlorophyll a</name>
        <dbReference type="ChEBI" id="CHEBI:58416"/>
        <label>5</label>
    </ligand>
</feature>
<feature type="binding site" description="axial binding residue" evidence="1">
    <location>
        <position position="222"/>
    </location>
    <ligand>
        <name>chlorophyll a</name>
        <dbReference type="ChEBI" id="CHEBI:58416"/>
        <label>3</label>
    </ligand>
    <ligandPart>
        <name>Mg</name>
        <dbReference type="ChEBI" id="CHEBI:25107"/>
    </ligandPart>
</feature>
<feature type="binding site" description="axial binding residue" evidence="1">
    <location>
        <position position="225"/>
    </location>
    <ligand>
        <name>chlorophyll a</name>
        <dbReference type="ChEBI" id="CHEBI:58416"/>
        <label>4</label>
    </ligand>
    <ligandPart>
        <name>Mg</name>
        <dbReference type="ChEBI" id="CHEBI:25107"/>
    </ligandPart>
</feature>
<feature type="binding site" evidence="1">
    <location>
        <position position="227"/>
    </location>
    <ligand>
        <name>chlorophyll a</name>
        <dbReference type="ChEBI" id="CHEBI:58416"/>
        <label>1</label>
    </ligand>
</feature>
<feature type="binding site" description="axial binding residue" evidence="1">
    <location>
        <position position="239"/>
    </location>
    <ligand>
        <name>chlorophyll a</name>
        <dbReference type="ChEBI" id="CHEBI:58416"/>
        <label>5</label>
    </ligand>
    <ligandPart>
        <name>Mg</name>
        <dbReference type="ChEBI" id="CHEBI:25107"/>
    </ligandPart>
</feature>
<feature type="binding site" description="axial binding residue" evidence="1">
    <location>
        <position position="254"/>
    </location>
    <ligand>
        <name>chlorophyll a</name>
        <dbReference type="ChEBI" id="CHEBI:58416"/>
        <label>6</label>
    </ligand>
    <ligandPart>
        <name>Mg</name>
        <dbReference type="ChEBI" id="CHEBI:25107"/>
    </ligandPart>
</feature>
<comment type="function">
    <text>The light-harvesting complex (LHC) functions as a light receptor, it captures and delivers excitation energy to photosystems with which it is closely associated.</text>
</comment>
<comment type="cofactor">
    <text evidence="1">Binds at least 14 chlorophylls (8 Chl-a and 6 Chl-b) and carotenoids such as lutein and neoxanthin.</text>
</comment>
<comment type="subunit">
    <text>The LHC complex consists of chlorophyll a-b binding proteins.</text>
</comment>
<comment type="subcellular location">
    <subcellularLocation>
        <location>Plastid</location>
        <location>Chloroplast thylakoid membrane</location>
        <topology>Multi-pass membrane protein</topology>
    </subcellularLocation>
</comment>
<comment type="domain">
    <text>The N-terminus of the protein extends into the stroma where it is involved with adhesion of granal membranes and post-translational modifications; both are believed to mediate the distribution of excitation energy between photosystems I and II.</text>
</comment>
<comment type="PTM">
    <text evidence="1">Photoregulated by reversible phosphorylation of its threonine residues.</text>
</comment>
<comment type="similarity">
    <text evidence="3">Belongs to the light-harvesting chlorophyll a/b-binding (LHC) protein family.</text>
</comment>
<dbReference type="EMBL" id="M21317">
    <property type="protein sequence ID" value="AAA33711.1"/>
    <property type="molecule type" value="mRNA"/>
</dbReference>
<dbReference type="PIR" id="S00442">
    <property type="entry name" value="S00442"/>
</dbReference>
<dbReference type="SMR" id="P13869"/>
<dbReference type="GO" id="GO:0009535">
    <property type="term" value="C:chloroplast thylakoid membrane"/>
    <property type="evidence" value="ECO:0007669"/>
    <property type="project" value="UniProtKB-SubCell"/>
</dbReference>
<dbReference type="GO" id="GO:0009522">
    <property type="term" value="C:photosystem I"/>
    <property type="evidence" value="ECO:0007669"/>
    <property type="project" value="UniProtKB-KW"/>
</dbReference>
<dbReference type="GO" id="GO:0009523">
    <property type="term" value="C:photosystem II"/>
    <property type="evidence" value="ECO:0007669"/>
    <property type="project" value="UniProtKB-KW"/>
</dbReference>
<dbReference type="GO" id="GO:0016168">
    <property type="term" value="F:chlorophyll binding"/>
    <property type="evidence" value="ECO:0007669"/>
    <property type="project" value="UniProtKB-KW"/>
</dbReference>
<dbReference type="GO" id="GO:0046872">
    <property type="term" value="F:metal ion binding"/>
    <property type="evidence" value="ECO:0007669"/>
    <property type="project" value="UniProtKB-KW"/>
</dbReference>
<dbReference type="GO" id="GO:0009765">
    <property type="term" value="P:photosynthesis, light harvesting"/>
    <property type="evidence" value="ECO:0007669"/>
    <property type="project" value="InterPro"/>
</dbReference>
<dbReference type="FunFam" id="1.10.3460.10:FF:000002">
    <property type="entry name" value="Chlorophyll a-b binding protein, chloroplastic"/>
    <property type="match status" value="1"/>
</dbReference>
<dbReference type="Gene3D" id="1.10.3460.10">
    <property type="entry name" value="Chlorophyll a/b binding protein domain"/>
    <property type="match status" value="1"/>
</dbReference>
<dbReference type="InterPro" id="IPR001344">
    <property type="entry name" value="Chloro_AB-bd_pln"/>
</dbReference>
<dbReference type="InterPro" id="IPR022796">
    <property type="entry name" value="Chloroa_b-bind"/>
</dbReference>
<dbReference type="PANTHER" id="PTHR21649">
    <property type="entry name" value="CHLOROPHYLL A/B BINDING PROTEIN"/>
    <property type="match status" value="1"/>
</dbReference>
<dbReference type="Pfam" id="PF00504">
    <property type="entry name" value="Chloroa_b-bind"/>
    <property type="match status" value="1"/>
</dbReference>
<dbReference type="SUPFAM" id="SSF103511">
    <property type="entry name" value="Chlorophyll a-b binding protein"/>
    <property type="match status" value="1"/>
</dbReference>
<sequence>MASACASSTIAAVAFSSPSSQKNGSIVGATKASFLGGKRLRVSKFIAPVGSRSVAVSAVAADPDRPLWFPGSTPPEWLDGSLPGDFGFDPLGLGSDPESLKWNAQAELVHSRWAMLGAAGIFIPEFLTKIGVLNTPSWYTAGEQEYFTDTTTLFVIELVLIGWAEGRRWADIIKPGCVNTDPIFPNNKLTGTDVGYPGGLWFDPLGWGSGSPAKIKELRTKEIKNGRLAMLAVMGAWFQHIYTGTGPIDNLFAHLADPGHATIFAAFSPK</sequence>
<keyword id="KW-0148">Chlorophyll</keyword>
<keyword id="KW-0150">Chloroplast</keyword>
<keyword id="KW-0157">Chromophore</keyword>
<keyword id="KW-0460">Magnesium</keyword>
<keyword id="KW-0472">Membrane</keyword>
<keyword id="KW-0479">Metal-binding</keyword>
<keyword id="KW-0597">Phosphoprotein</keyword>
<keyword id="KW-0602">Photosynthesis</keyword>
<keyword id="KW-0603">Photosystem I</keyword>
<keyword id="KW-0604">Photosystem II</keyword>
<keyword id="KW-0934">Plastid</keyword>
<keyword id="KW-0793">Thylakoid</keyword>
<keyword id="KW-0809">Transit peptide</keyword>
<keyword id="KW-0812">Transmembrane</keyword>
<keyword id="KW-1133">Transmembrane helix</keyword>